<organism>
    <name type="scientific">Escherichia coli (strain 55989 / EAEC)</name>
    <dbReference type="NCBI Taxonomy" id="585055"/>
    <lineage>
        <taxon>Bacteria</taxon>
        <taxon>Pseudomonadati</taxon>
        <taxon>Pseudomonadota</taxon>
        <taxon>Gammaproteobacteria</taxon>
        <taxon>Enterobacterales</taxon>
        <taxon>Enterobacteriaceae</taxon>
        <taxon>Escherichia</taxon>
    </lineage>
</organism>
<comment type="function">
    <text evidence="1">This protein is one of the two subunits of integration host factor, a specific DNA-binding protein that functions in genetic recombination as well as in transcriptional and translational control.</text>
</comment>
<comment type="subunit">
    <text evidence="1">Heterodimer of an alpha and a beta chain.</text>
</comment>
<comment type="similarity">
    <text evidence="1">Belongs to the bacterial histone-like protein family.</text>
</comment>
<name>IHFB_ECO55</name>
<accession>B7LDA4</accession>
<sequence>MTKSELIERLATQQSHIPAKTVEDAVKEMLEHMASTLAQGERIEIRGFGSFSLHYRAPRTGRNPKTGDKVELEGKYVPHFKPGKELRDRANIYG</sequence>
<keyword id="KW-0233">DNA recombination</keyword>
<keyword id="KW-0238">DNA-binding</keyword>
<keyword id="KW-1185">Reference proteome</keyword>
<keyword id="KW-0804">Transcription</keyword>
<keyword id="KW-0805">Transcription regulation</keyword>
<keyword id="KW-0810">Translation regulation</keyword>
<feature type="chain" id="PRO_1000190440" description="Integration host factor subunit beta">
    <location>
        <begin position="1"/>
        <end position="94"/>
    </location>
</feature>
<proteinExistence type="inferred from homology"/>
<evidence type="ECO:0000255" key="1">
    <source>
        <dbReference type="HAMAP-Rule" id="MF_00381"/>
    </source>
</evidence>
<dbReference type="EMBL" id="CU928145">
    <property type="protein sequence ID" value="CAU96821.1"/>
    <property type="molecule type" value="Genomic_DNA"/>
</dbReference>
<dbReference type="RefSeq" id="WP_000167336.1">
    <property type="nucleotide sequence ID" value="NZ_CP028304.1"/>
</dbReference>
<dbReference type="SMR" id="B7LDA4"/>
<dbReference type="GeneID" id="93776505"/>
<dbReference type="KEGG" id="eck:EC55989_0957"/>
<dbReference type="HOGENOM" id="CLU_105066_2_0_6"/>
<dbReference type="Proteomes" id="UP000000746">
    <property type="component" value="Chromosome"/>
</dbReference>
<dbReference type="GO" id="GO:0005694">
    <property type="term" value="C:chromosome"/>
    <property type="evidence" value="ECO:0007669"/>
    <property type="project" value="InterPro"/>
</dbReference>
<dbReference type="GO" id="GO:0005829">
    <property type="term" value="C:cytosol"/>
    <property type="evidence" value="ECO:0007669"/>
    <property type="project" value="TreeGrafter"/>
</dbReference>
<dbReference type="GO" id="GO:0003677">
    <property type="term" value="F:DNA binding"/>
    <property type="evidence" value="ECO:0007669"/>
    <property type="project" value="UniProtKB-UniRule"/>
</dbReference>
<dbReference type="GO" id="GO:0030527">
    <property type="term" value="F:structural constituent of chromatin"/>
    <property type="evidence" value="ECO:0007669"/>
    <property type="project" value="InterPro"/>
</dbReference>
<dbReference type="GO" id="GO:0006310">
    <property type="term" value="P:DNA recombination"/>
    <property type="evidence" value="ECO:0007669"/>
    <property type="project" value="UniProtKB-UniRule"/>
</dbReference>
<dbReference type="GO" id="GO:0006355">
    <property type="term" value="P:regulation of DNA-templated transcription"/>
    <property type="evidence" value="ECO:0007669"/>
    <property type="project" value="UniProtKB-UniRule"/>
</dbReference>
<dbReference type="GO" id="GO:0006417">
    <property type="term" value="P:regulation of translation"/>
    <property type="evidence" value="ECO:0007669"/>
    <property type="project" value="UniProtKB-UniRule"/>
</dbReference>
<dbReference type="CDD" id="cd13836">
    <property type="entry name" value="IHF_B"/>
    <property type="match status" value="1"/>
</dbReference>
<dbReference type="FunFam" id="4.10.520.10:FF:000003">
    <property type="entry name" value="Integration host factor subunit beta"/>
    <property type="match status" value="1"/>
</dbReference>
<dbReference type="Gene3D" id="4.10.520.10">
    <property type="entry name" value="IHF-like DNA-binding proteins"/>
    <property type="match status" value="1"/>
</dbReference>
<dbReference type="HAMAP" id="MF_00381">
    <property type="entry name" value="IHF_beta"/>
    <property type="match status" value="1"/>
</dbReference>
<dbReference type="InterPro" id="IPR000119">
    <property type="entry name" value="Hist_DNA-bd"/>
</dbReference>
<dbReference type="InterPro" id="IPR020816">
    <property type="entry name" value="Histone-like_DNA-bd_CS"/>
</dbReference>
<dbReference type="InterPro" id="IPR010992">
    <property type="entry name" value="IHF-like_DNA-bd_dom_sf"/>
</dbReference>
<dbReference type="InterPro" id="IPR005685">
    <property type="entry name" value="IHF_beta"/>
</dbReference>
<dbReference type="NCBIfam" id="TIGR00988">
    <property type="entry name" value="hip"/>
    <property type="match status" value="1"/>
</dbReference>
<dbReference type="NCBIfam" id="NF001222">
    <property type="entry name" value="PRK00199.1"/>
    <property type="match status" value="1"/>
</dbReference>
<dbReference type="PANTHER" id="PTHR33175">
    <property type="entry name" value="DNA-BINDING PROTEIN HU"/>
    <property type="match status" value="1"/>
</dbReference>
<dbReference type="PANTHER" id="PTHR33175:SF5">
    <property type="entry name" value="INTEGRATION HOST FACTOR SUBUNIT BETA"/>
    <property type="match status" value="1"/>
</dbReference>
<dbReference type="Pfam" id="PF00216">
    <property type="entry name" value="Bac_DNA_binding"/>
    <property type="match status" value="1"/>
</dbReference>
<dbReference type="PRINTS" id="PR01727">
    <property type="entry name" value="DNABINDINGHU"/>
</dbReference>
<dbReference type="SMART" id="SM00411">
    <property type="entry name" value="BHL"/>
    <property type="match status" value="1"/>
</dbReference>
<dbReference type="SUPFAM" id="SSF47729">
    <property type="entry name" value="IHF-like DNA-binding proteins"/>
    <property type="match status" value="1"/>
</dbReference>
<dbReference type="PROSITE" id="PS00045">
    <property type="entry name" value="HISTONE_LIKE"/>
    <property type="match status" value="1"/>
</dbReference>
<gene>
    <name evidence="1" type="primary">ihfB</name>
    <name evidence="1" type="synonym">himD</name>
    <name type="ordered locus">EC55989_0957</name>
</gene>
<reference key="1">
    <citation type="journal article" date="2009" name="PLoS Genet.">
        <title>Organised genome dynamics in the Escherichia coli species results in highly diverse adaptive paths.</title>
        <authorList>
            <person name="Touchon M."/>
            <person name="Hoede C."/>
            <person name="Tenaillon O."/>
            <person name="Barbe V."/>
            <person name="Baeriswyl S."/>
            <person name="Bidet P."/>
            <person name="Bingen E."/>
            <person name="Bonacorsi S."/>
            <person name="Bouchier C."/>
            <person name="Bouvet O."/>
            <person name="Calteau A."/>
            <person name="Chiapello H."/>
            <person name="Clermont O."/>
            <person name="Cruveiller S."/>
            <person name="Danchin A."/>
            <person name="Diard M."/>
            <person name="Dossat C."/>
            <person name="Karoui M.E."/>
            <person name="Frapy E."/>
            <person name="Garry L."/>
            <person name="Ghigo J.M."/>
            <person name="Gilles A.M."/>
            <person name="Johnson J."/>
            <person name="Le Bouguenec C."/>
            <person name="Lescat M."/>
            <person name="Mangenot S."/>
            <person name="Martinez-Jehanne V."/>
            <person name="Matic I."/>
            <person name="Nassif X."/>
            <person name="Oztas S."/>
            <person name="Petit M.A."/>
            <person name="Pichon C."/>
            <person name="Rouy Z."/>
            <person name="Ruf C.S."/>
            <person name="Schneider D."/>
            <person name="Tourret J."/>
            <person name="Vacherie B."/>
            <person name="Vallenet D."/>
            <person name="Medigue C."/>
            <person name="Rocha E.P.C."/>
            <person name="Denamur E."/>
        </authorList>
    </citation>
    <scope>NUCLEOTIDE SEQUENCE [LARGE SCALE GENOMIC DNA]</scope>
    <source>
        <strain>55989 / EAEC</strain>
    </source>
</reference>
<protein>
    <recommendedName>
        <fullName evidence="1">Integration host factor subunit beta</fullName>
        <shortName evidence="1">IHF-beta</shortName>
    </recommendedName>
</protein>